<reference key="1">
    <citation type="submission" date="2005-07" db="EMBL/GenBank/DDBJ databases">
        <title>Porcine heart CXCR4 sequence.</title>
        <authorList>
            <person name="Lin H."/>
            <person name="Canty J.M."/>
            <person name="Lee T."/>
        </authorList>
    </citation>
    <scope>NUCLEOTIDE SEQUENCE [MRNA]</scope>
    <source>
        <tissue>Heart</tissue>
    </source>
</reference>
<reference key="2">
    <citation type="journal article" date="2004" name="Nucleic Acids Res.">
        <title>PEDE (Pig EST Data Explorer): construction of a database for ESTs derived from porcine full-length cDNA libraries.</title>
        <authorList>
            <person name="Uenishi H."/>
            <person name="Eguchi T."/>
            <person name="Suzuki K."/>
            <person name="Sawazaki T."/>
            <person name="Toki D."/>
            <person name="Shinkai H."/>
            <person name="Okumura N."/>
            <person name="Hamasima N."/>
            <person name="Awata T."/>
        </authorList>
    </citation>
    <scope>NUCLEOTIDE SEQUENCE [LARGE SCALE MRNA]</scope>
</reference>
<evidence type="ECO:0000250" key="1"/>
<evidence type="ECO:0000250" key="2">
    <source>
        <dbReference type="UniProtKB" id="P61073"/>
    </source>
</evidence>
<evidence type="ECO:0000250" key="3">
    <source>
        <dbReference type="UniProtKB" id="P70658"/>
    </source>
</evidence>
<evidence type="ECO:0000255" key="4">
    <source>
        <dbReference type="PROSITE-ProRule" id="PRU00521"/>
    </source>
</evidence>
<evidence type="ECO:0000256" key="5">
    <source>
        <dbReference type="SAM" id="MobiDB-lite"/>
    </source>
</evidence>
<evidence type="ECO:0000305" key="6"/>
<keyword id="KW-0965">Cell junction</keyword>
<keyword id="KW-1003">Cell membrane</keyword>
<keyword id="KW-1015">Disulfide bond</keyword>
<keyword id="KW-0967">Endosome</keyword>
<keyword id="KW-0297">G-protein coupled receptor</keyword>
<keyword id="KW-0325">Glycoprotein</keyword>
<keyword id="KW-1017">Isopeptide bond</keyword>
<keyword id="KW-0458">Lysosome</keyword>
<keyword id="KW-0472">Membrane</keyword>
<keyword id="KW-0597">Phosphoprotein</keyword>
<keyword id="KW-0654">Proteoglycan</keyword>
<keyword id="KW-0675">Receptor</keyword>
<keyword id="KW-1185">Reference proteome</keyword>
<keyword id="KW-0765">Sulfation</keyword>
<keyword id="KW-0807">Transducer</keyword>
<keyword id="KW-0812">Transmembrane</keyword>
<keyword id="KW-1133">Transmembrane helix</keyword>
<keyword id="KW-0832">Ubl conjugation</keyword>
<organism>
    <name type="scientific">Sus scrofa</name>
    <name type="common">Pig</name>
    <dbReference type="NCBI Taxonomy" id="9823"/>
    <lineage>
        <taxon>Eukaryota</taxon>
        <taxon>Metazoa</taxon>
        <taxon>Chordata</taxon>
        <taxon>Craniata</taxon>
        <taxon>Vertebrata</taxon>
        <taxon>Euteleostomi</taxon>
        <taxon>Mammalia</taxon>
        <taxon>Eutheria</taxon>
        <taxon>Laurasiatheria</taxon>
        <taxon>Artiodactyla</taxon>
        <taxon>Suina</taxon>
        <taxon>Suidae</taxon>
        <taxon>Sus</taxon>
    </lineage>
</organism>
<proteinExistence type="evidence at transcript level"/>
<accession>Q764M9</accession>
<protein>
    <recommendedName>
        <fullName>C-X-C chemokine receptor type 4</fullName>
        <shortName>CXC-R4</shortName>
        <shortName>CXCR-4</shortName>
    </recommendedName>
    <cdAntigenName>CD184</cdAntigenName>
</protein>
<comment type="function">
    <text evidence="2 3">Receptor for the C-X-C chemokine CXCL12/SDF-1 that transduces a signal by increasing intracellular calcium ion levels and enhancing MAPK1/MAPK3 activation. Involved in the AKT signaling cascade (By similarity). Plays a role in regulation of cell migration, e.g. during wound healing. Acts as a receptor for extracellular ubiquitin; leading to enhanced intracellular calcium ions and reduced cellular cAMP levels. Binds bacterial lipopolysaccharide (LPS) et mediates LPS-induced inflammatory response, including TNF secretion by monocytes (By similarity). Involved in hematopoiesis and in cardiac ventricular septum formation. Also plays an essential role in vascularization of the gastrointestinal tract, probably by regulating vascular branching and/or remodeling processes in endothelial cells. Involved in cerebellar development. In the CNS, could mediate hippocampal-neuron survival (By similarity).</text>
</comment>
<comment type="subunit">
    <text evidence="2">Monomer. Can form homodimers. Interacts with CD164. Interacts with ARRB2; the interaction is dependent on the C-terminal phosphorylation of CXCR4 and allows activation of MAPK1 and MAPK3. Interacts with ARR3; the interaction is dependent on the C-terminal phosphorylation of CXCR4 and modulates calcium mobilization. Interacts with RNF113A; the interaction, enhanced by CXCL12, promotes CXCR4 ubiquitination and subsequent degradation. Interacts (via the cytoplasmic C-terminal) with ITCH (via the WW domains I and II); the interaction, enhanced by CXCL12, promotes CXCR4 ubiquitination and leads to its degradation. Interacts with extracellular ubiquitin. Interacts with DBN1; this interaction is enhanced by antigenic stimulation. Following LPS binding, may form a complex with GDF5, HSP90AA1 and HSPA8.</text>
</comment>
<comment type="subcellular location">
    <subcellularLocation>
        <location evidence="2">Cell membrane</location>
        <topology evidence="2">Multi-pass membrane protein</topology>
    </subcellularLocation>
    <subcellularLocation>
        <location evidence="1">Cell junction</location>
    </subcellularLocation>
    <subcellularLocation>
        <location evidence="1">Early endosome</location>
    </subcellularLocation>
    <subcellularLocation>
        <location evidence="1">Late endosome</location>
    </subcellularLocation>
    <subcellularLocation>
        <location evidence="1">Lysosome</location>
    </subcellularLocation>
    <text evidence="1">In unstimulated cells, diffuse pattern on plasma membrane. On agonist stimulation, colocalizes with ITCH at the plasma membrane where it becomes ubiquitinated (By similarity). In the presence of antigen, distributes to the immunological synapse forming at the T-cell-APC contact area, where it localizes at the peripheral and distal supramolecular activation cluster (SMAC) (By similarity).</text>
</comment>
<comment type="PTM">
    <text evidence="2">Phosphorylated on agonist stimulation. Rapidly phosphorylated on serine and threonine residues in the C-terminal. Phosphorylation at Ser-325 and Ser-326 leads to recruitment of ITCH, ubiquitination and protein degradation.</text>
</comment>
<comment type="PTM">
    <text evidence="2">Ubiquitinated after ligand binding, leading to its degradation. Ubiquitinated by ITCH at the cell membrane on agonist stimulation. The ubiquitin-dependent mechanism, endosomal sorting complex required for transport (ESCRT), then targets CXCR4 for lysosomal degradation. This process is dependent also on prior Ser-/Thr-phosphorylation in the C-terminal of CXCR4. Also binding of ARRB1 to STAM negatively regulates CXCR4 sorting to lysosomes though modulating ubiquitination of SFR5S.</text>
</comment>
<comment type="PTM">
    <text evidence="2">Sulfation is required for efficient binding of CXCL12/SDF-1alpha and promotes its dimerization.</text>
</comment>
<comment type="PTM">
    <text evidence="2">O- and N-glycosylated. N-glycosylation can mask coreceptor function. The O-glycosylation chondroitin sulfate attachment does not affect interaction with CXCL12/SDF-1alpha nor its coreceptor activity.</text>
</comment>
<comment type="similarity">
    <text evidence="4">Belongs to the G-protein coupled receptor 1 family.</text>
</comment>
<gene>
    <name type="primary">CXCR4</name>
</gene>
<sequence>MDGFRIFTSDNYTEDDLGSGDYDSIKEPCFREENAHFNRIFLPTVYSIIFLTGIVGNGLVILVMGYQKKLRSMTDKYRLHLSVADLLFVLTLPFWAVDAVANWYFGKFLCKAVHVIYTVNLYSSVLILAFISLDRYLAIVHATNSQRPRKLLAEKVVYVGVWIPALLLTIPDFIFANVREGDGRYICDRFYPNDLWLVVFQFQHIMVGLILPGIVILSCYCIIISKLSHSKGYQKRKALKTTVILILAFFACWLPYYIGISIDSFILLEIIQQGCEFESTVHKWISITEALAFFHCCLNPILYAFLGAKFKTSAQHALTSVSRGSSLKILSKGKRGGHSSVSTESESSSFHSS</sequence>
<feature type="chain" id="PRO_0000247982" description="C-X-C chemokine receptor type 4">
    <location>
        <begin position="1"/>
        <end position="353"/>
    </location>
</feature>
<feature type="topological domain" description="Extracellular" evidence="6">
    <location>
        <begin position="1"/>
        <end position="39"/>
    </location>
</feature>
<feature type="transmembrane region" description="Helical; Name=1" evidence="2">
    <location>
        <begin position="40"/>
        <end position="64"/>
    </location>
</feature>
<feature type="topological domain" description="Cytoplasmic" evidence="6">
    <location>
        <begin position="65"/>
        <end position="78"/>
    </location>
</feature>
<feature type="transmembrane region" description="Helical; Name=2" evidence="2">
    <location>
        <begin position="79"/>
        <end position="100"/>
    </location>
</feature>
<feature type="topological domain" description="Extracellular" evidence="6">
    <location>
        <begin position="101"/>
        <end position="111"/>
    </location>
</feature>
<feature type="transmembrane region" description="Helical; Name=3" evidence="2">
    <location>
        <begin position="112"/>
        <end position="131"/>
    </location>
</feature>
<feature type="topological domain" description="Cytoplasmic" evidence="6">
    <location>
        <begin position="132"/>
        <end position="155"/>
    </location>
</feature>
<feature type="transmembrane region" description="Helical; Name=4" evidence="2">
    <location>
        <begin position="156"/>
        <end position="175"/>
    </location>
</feature>
<feature type="topological domain" description="Extracellular" evidence="6">
    <location>
        <begin position="176"/>
        <end position="196"/>
    </location>
</feature>
<feature type="transmembrane region" description="Helical; Name=5" evidence="2">
    <location>
        <begin position="197"/>
        <end position="217"/>
    </location>
</feature>
<feature type="topological domain" description="Cytoplasmic" evidence="6">
    <location>
        <begin position="218"/>
        <end position="242"/>
    </location>
</feature>
<feature type="transmembrane region" description="Helical; Name=6" evidence="2">
    <location>
        <begin position="243"/>
        <end position="262"/>
    </location>
</feature>
<feature type="topological domain" description="Extracellular" evidence="6">
    <location>
        <begin position="263"/>
        <end position="283"/>
    </location>
</feature>
<feature type="transmembrane region" description="Helical; Name=7" evidence="2">
    <location>
        <begin position="284"/>
        <end position="303"/>
    </location>
</feature>
<feature type="topological domain" description="Cytoplasmic" evidence="6">
    <location>
        <begin position="304"/>
        <end position="353"/>
    </location>
</feature>
<feature type="region of interest" description="Important for chemokine binding and signaling" evidence="1">
    <location>
        <begin position="1"/>
        <end position="22"/>
    </location>
</feature>
<feature type="region of interest" description="Chemokine binding" evidence="1">
    <location>
        <begin position="95"/>
        <end position="98"/>
    </location>
</feature>
<feature type="region of interest" description="Chemokine binding" evidence="1">
    <location>
        <begin position="114"/>
        <end position="118"/>
    </location>
</feature>
<feature type="region of interest" description="Involved in dimerization; when bound to chemokine" evidence="1">
    <location>
        <begin position="136"/>
        <end position="148"/>
    </location>
</feature>
<feature type="region of interest" description="Chemokine binding, important for signaling" evidence="1">
    <location>
        <begin position="187"/>
        <end position="191"/>
    </location>
</feature>
<feature type="region of interest" description="Involved in dimerization" evidence="1">
    <location>
        <begin position="192"/>
        <end position="211"/>
    </location>
</feature>
<feature type="region of interest" description="Involved in dimerization" evidence="1">
    <location>
        <begin position="267"/>
        <end position="269"/>
    </location>
</feature>
<feature type="region of interest" description="Disordered" evidence="5">
    <location>
        <begin position="330"/>
        <end position="353"/>
    </location>
</feature>
<feature type="short sequence motif" description="Important for signaling" evidence="1">
    <location>
        <begin position="134"/>
        <end position="136"/>
    </location>
</feature>
<feature type="compositionally biased region" description="Low complexity" evidence="5">
    <location>
        <begin position="338"/>
        <end position="353"/>
    </location>
</feature>
<feature type="site" description="Chemokine binding" evidence="1">
    <location>
        <position position="172"/>
    </location>
</feature>
<feature type="site" description="Chemokine binding" evidence="1">
    <location>
        <position position="289"/>
    </location>
</feature>
<feature type="modified residue" description="Sulfotyrosine" evidence="2">
    <location>
        <position position="12"/>
    </location>
</feature>
<feature type="modified residue" description="Sulfotyrosine" evidence="2">
    <location>
        <position position="22"/>
    </location>
</feature>
<feature type="modified residue" description="Phosphoserine" evidence="2">
    <location>
        <position position="320"/>
    </location>
</feature>
<feature type="modified residue" description="Phosphoserine" evidence="2">
    <location>
        <position position="322"/>
    </location>
</feature>
<feature type="modified residue" description="Phosphoserine; by PKC and GRK6" evidence="2">
    <location>
        <position position="325"/>
    </location>
</feature>
<feature type="modified residue" description="Phosphoserine; by PKC and GRK6" evidence="2">
    <location>
        <position position="326"/>
    </location>
</feature>
<feature type="modified residue" description="Phosphoserine; by GRK6" evidence="2">
    <location>
        <position position="331"/>
    </location>
</feature>
<feature type="modified residue" description="Phosphoserine; by GRK6" evidence="2">
    <location>
        <position position="340"/>
    </location>
</feature>
<feature type="modified residue" description="Phosphoserine" evidence="2">
    <location>
        <position position="349"/>
    </location>
</feature>
<feature type="modified residue" description="Phosphoserine" evidence="2">
    <location>
        <position position="352"/>
    </location>
</feature>
<feature type="glycosylation site" description="N-linked (GlcNAc...) asparagine" evidence="1">
    <location>
        <position position="11"/>
    </location>
</feature>
<feature type="glycosylation site" description="O-linked (Xyl...) (chondroitin sulfate) serine" evidence="2">
    <location>
        <position position="19"/>
    </location>
</feature>
<feature type="disulfide bond" evidence="4">
    <location>
        <begin position="29"/>
        <end position="275"/>
    </location>
</feature>
<feature type="disulfide bond" evidence="4">
    <location>
        <begin position="110"/>
        <end position="187"/>
    </location>
</feature>
<feature type="cross-link" description="Glycyl lysine isopeptide (Lys-Gly) (interchain with G-Cter in ubiquitin)" evidence="2">
    <location>
        <position position="332"/>
    </location>
</feature>
<name>CXCR4_PIG</name>
<dbReference type="EMBL" id="DQ124104">
    <property type="protein sequence ID" value="AAZ32767.1"/>
    <property type="molecule type" value="mRNA"/>
</dbReference>
<dbReference type="EMBL" id="AB116560">
    <property type="protein sequence ID" value="BAD06314.1"/>
    <property type="molecule type" value="mRNA"/>
</dbReference>
<dbReference type="RefSeq" id="NP_998938.1">
    <property type="nucleotide sequence ID" value="NM_213773.1"/>
</dbReference>
<dbReference type="SMR" id="Q764M9"/>
<dbReference type="FunCoup" id="Q764M9">
    <property type="interactions" value="523"/>
</dbReference>
<dbReference type="STRING" id="9823.ENSSSCP00000058444"/>
<dbReference type="GlyCosmos" id="Q764M9">
    <property type="glycosylation" value="2 sites, No reported glycans"/>
</dbReference>
<dbReference type="GlyGen" id="Q764M9">
    <property type="glycosylation" value="2 sites"/>
</dbReference>
<dbReference type="PaxDb" id="9823-ENSSSCP00000016630"/>
<dbReference type="Ensembl" id="ENSSSCT00000064385.3">
    <property type="protein sequence ID" value="ENSSSCP00000058444.1"/>
    <property type="gene ID" value="ENSSSCG00000039416.3"/>
</dbReference>
<dbReference type="Ensembl" id="ENSSSCT00015020682.1">
    <property type="protein sequence ID" value="ENSSSCP00015008131.1"/>
    <property type="gene ID" value="ENSSSCG00015015591.1"/>
</dbReference>
<dbReference type="Ensembl" id="ENSSSCT00025076962.1">
    <property type="protein sequence ID" value="ENSSSCP00025033351.1"/>
    <property type="gene ID" value="ENSSSCG00025056249.1"/>
</dbReference>
<dbReference type="Ensembl" id="ENSSSCT00030074583.1">
    <property type="protein sequence ID" value="ENSSSCP00030034123.1"/>
    <property type="gene ID" value="ENSSSCG00030053476.1"/>
</dbReference>
<dbReference type="Ensembl" id="ENSSSCT00035064749.1">
    <property type="protein sequence ID" value="ENSSSCP00035026219.1"/>
    <property type="gene ID" value="ENSSSCG00035048595.1"/>
</dbReference>
<dbReference type="Ensembl" id="ENSSSCT00040007384.1">
    <property type="protein sequence ID" value="ENSSSCP00040002918.1"/>
    <property type="gene ID" value="ENSSSCG00040005597.1"/>
</dbReference>
<dbReference type="Ensembl" id="ENSSSCT00045018913.1">
    <property type="protein sequence ID" value="ENSSSCP00045013006.1"/>
    <property type="gene ID" value="ENSSSCG00045011133.1"/>
</dbReference>
<dbReference type="Ensembl" id="ENSSSCT00050001319.1">
    <property type="protein sequence ID" value="ENSSSCP00050000351.1"/>
    <property type="gene ID" value="ENSSSCG00050001119.1"/>
</dbReference>
<dbReference type="Ensembl" id="ENSSSCT00055031653.1">
    <property type="protein sequence ID" value="ENSSSCP00055025190.1"/>
    <property type="gene ID" value="ENSSSCG00055016063.1"/>
</dbReference>
<dbReference type="Ensembl" id="ENSSSCT00060101263.1">
    <property type="protein sequence ID" value="ENSSSCP00060043987.1"/>
    <property type="gene ID" value="ENSSSCG00060074003.1"/>
</dbReference>
<dbReference type="Ensembl" id="ENSSSCT00065010356.1">
    <property type="protein sequence ID" value="ENSSSCP00065004314.1"/>
    <property type="gene ID" value="ENSSSCG00065007642.1"/>
</dbReference>
<dbReference type="Ensembl" id="ENSSSCT00070009306.1">
    <property type="protein sequence ID" value="ENSSSCP00070007640.1"/>
    <property type="gene ID" value="ENSSSCG00070004922.1"/>
</dbReference>
<dbReference type="Ensembl" id="ENSSSCT00090009661">
    <property type="protein sequence ID" value="ENSSSCP00090005861"/>
    <property type="gene ID" value="ENSSSCG00090005527"/>
</dbReference>
<dbReference type="Ensembl" id="ENSSSCT00105001233">
    <property type="protein sequence ID" value="ENSSSCP00105000822"/>
    <property type="gene ID" value="ENSSSCG00105000677"/>
</dbReference>
<dbReference type="Ensembl" id="ENSSSCT00110023555">
    <property type="protein sequence ID" value="ENSSSCP00110015962"/>
    <property type="gene ID" value="ENSSSCG00110012270"/>
</dbReference>
<dbReference type="Ensembl" id="ENSSSCT00115015919">
    <property type="protein sequence ID" value="ENSSSCP00115015017"/>
    <property type="gene ID" value="ENSSSCG00115009207"/>
</dbReference>
<dbReference type="Ensembl" id="ENSSSCT00130043222">
    <property type="protein sequence ID" value="ENSSSCP00130030435"/>
    <property type="gene ID" value="ENSSSCG00130022353"/>
</dbReference>
<dbReference type="GeneID" id="396659"/>
<dbReference type="KEGG" id="ssc:396659"/>
<dbReference type="CTD" id="7852"/>
<dbReference type="VGNC" id="VGNC:96094">
    <property type="gene designation" value="CXCR4"/>
</dbReference>
<dbReference type="eggNOG" id="KOG3656">
    <property type="taxonomic scope" value="Eukaryota"/>
</dbReference>
<dbReference type="GeneTree" id="ENSGT01050000244848"/>
<dbReference type="HOGENOM" id="CLU_009579_8_3_1"/>
<dbReference type="InParanoid" id="Q764M9"/>
<dbReference type="OMA" id="YVCQRFY"/>
<dbReference type="OrthoDB" id="8413490at2759"/>
<dbReference type="TreeFam" id="TF330966"/>
<dbReference type="Reactome" id="R-SSC-380108">
    <property type="pathway name" value="Chemokine receptors bind chemokines"/>
</dbReference>
<dbReference type="Reactome" id="R-SSC-418594">
    <property type="pathway name" value="G alpha (i) signalling events"/>
</dbReference>
<dbReference type="Proteomes" id="UP000008227">
    <property type="component" value="Chromosome 15"/>
</dbReference>
<dbReference type="Proteomes" id="UP000314985">
    <property type="component" value="Chromosome 15"/>
</dbReference>
<dbReference type="Proteomes" id="UP000694570">
    <property type="component" value="Unplaced"/>
</dbReference>
<dbReference type="Proteomes" id="UP000694571">
    <property type="component" value="Unplaced"/>
</dbReference>
<dbReference type="Proteomes" id="UP000694720">
    <property type="component" value="Unplaced"/>
</dbReference>
<dbReference type="Proteomes" id="UP000694722">
    <property type="component" value="Unplaced"/>
</dbReference>
<dbReference type="Proteomes" id="UP000694723">
    <property type="component" value="Unplaced"/>
</dbReference>
<dbReference type="Proteomes" id="UP000694724">
    <property type="component" value="Unplaced"/>
</dbReference>
<dbReference type="Proteomes" id="UP000694725">
    <property type="component" value="Unplaced"/>
</dbReference>
<dbReference type="Proteomes" id="UP000694726">
    <property type="component" value="Unplaced"/>
</dbReference>
<dbReference type="Proteomes" id="UP000694727">
    <property type="component" value="Unplaced"/>
</dbReference>
<dbReference type="Proteomes" id="UP000694728">
    <property type="component" value="Unplaced"/>
</dbReference>
<dbReference type="Bgee" id="ENSSSCG00000039416">
    <property type="expression patterns" value="Expressed in tonsil and 41 other cell types or tissues"/>
</dbReference>
<dbReference type="GO" id="GO:0070161">
    <property type="term" value="C:anchoring junction"/>
    <property type="evidence" value="ECO:0007669"/>
    <property type="project" value="UniProtKB-SubCell"/>
</dbReference>
<dbReference type="GO" id="GO:0031252">
    <property type="term" value="C:cell leading edge"/>
    <property type="evidence" value="ECO:0007669"/>
    <property type="project" value="Ensembl"/>
</dbReference>
<dbReference type="GO" id="GO:0005769">
    <property type="term" value="C:early endosome"/>
    <property type="evidence" value="ECO:0000250"/>
    <property type="project" value="UniProtKB"/>
</dbReference>
<dbReference type="GO" id="GO:0009897">
    <property type="term" value="C:external side of plasma membrane"/>
    <property type="evidence" value="ECO:0000318"/>
    <property type="project" value="GO_Central"/>
</dbReference>
<dbReference type="GO" id="GO:0005770">
    <property type="term" value="C:late endosome"/>
    <property type="evidence" value="ECO:0000250"/>
    <property type="project" value="UniProtKB"/>
</dbReference>
<dbReference type="GO" id="GO:0005764">
    <property type="term" value="C:lysosome"/>
    <property type="evidence" value="ECO:0000250"/>
    <property type="project" value="UniProtKB"/>
</dbReference>
<dbReference type="GO" id="GO:0005886">
    <property type="term" value="C:plasma membrane"/>
    <property type="evidence" value="ECO:0000250"/>
    <property type="project" value="UniProtKB"/>
</dbReference>
<dbReference type="GO" id="GO:0032991">
    <property type="term" value="C:protein-containing complex"/>
    <property type="evidence" value="ECO:0007669"/>
    <property type="project" value="Ensembl"/>
</dbReference>
<dbReference type="GO" id="GO:0003779">
    <property type="term" value="F:actin binding"/>
    <property type="evidence" value="ECO:0007669"/>
    <property type="project" value="Ensembl"/>
</dbReference>
<dbReference type="GO" id="GO:0019957">
    <property type="term" value="F:C-C chemokine binding"/>
    <property type="evidence" value="ECO:0000318"/>
    <property type="project" value="GO_Central"/>
</dbReference>
<dbReference type="GO" id="GO:0016493">
    <property type="term" value="F:C-C chemokine receptor activity"/>
    <property type="evidence" value="ECO:0000318"/>
    <property type="project" value="GO_Central"/>
</dbReference>
<dbReference type="GO" id="GO:0038147">
    <property type="term" value="F:C-X-C motif chemokine 12 receptor activity"/>
    <property type="evidence" value="ECO:0000250"/>
    <property type="project" value="UniProtKB"/>
</dbReference>
<dbReference type="GO" id="GO:0032027">
    <property type="term" value="F:myosin light chain binding"/>
    <property type="evidence" value="ECO:0007669"/>
    <property type="project" value="Ensembl"/>
</dbReference>
<dbReference type="GO" id="GO:0043130">
    <property type="term" value="F:ubiquitin binding"/>
    <property type="evidence" value="ECO:0007669"/>
    <property type="project" value="Ensembl"/>
</dbReference>
<dbReference type="GO" id="GO:0031625">
    <property type="term" value="F:ubiquitin protein ligase binding"/>
    <property type="evidence" value="ECO:0007669"/>
    <property type="project" value="Ensembl"/>
</dbReference>
<dbReference type="GO" id="GO:0007420">
    <property type="term" value="P:brain development"/>
    <property type="evidence" value="ECO:0000318"/>
    <property type="project" value="GO_Central"/>
</dbReference>
<dbReference type="GO" id="GO:0019722">
    <property type="term" value="P:calcium-mediated signaling"/>
    <property type="evidence" value="ECO:0000318"/>
    <property type="project" value="GO_Central"/>
</dbReference>
<dbReference type="GO" id="GO:0060326">
    <property type="term" value="P:cell chemotaxis"/>
    <property type="evidence" value="ECO:0000318"/>
    <property type="project" value="GO_Central"/>
</dbReference>
<dbReference type="GO" id="GO:0071345">
    <property type="term" value="P:cellular response to cytokine stimulus"/>
    <property type="evidence" value="ECO:0000250"/>
    <property type="project" value="UniProtKB"/>
</dbReference>
<dbReference type="GO" id="GO:0038160">
    <property type="term" value="P:CXCL12-activated CXCR4 signaling pathway"/>
    <property type="evidence" value="ECO:0000250"/>
    <property type="project" value="UniProtKB"/>
</dbReference>
<dbReference type="GO" id="GO:0006955">
    <property type="term" value="P:immune response"/>
    <property type="evidence" value="ECO:0000318"/>
    <property type="project" value="GO_Central"/>
</dbReference>
<dbReference type="GO" id="GO:0022008">
    <property type="term" value="P:neurogenesis"/>
    <property type="evidence" value="ECO:0000318"/>
    <property type="project" value="GO_Central"/>
</dbReference>
<dbReference type="GO" id="GO:0030335">
    <property type="term" value="P:positive regulation of cell migration"/>
    <property type="evidence" value="ECO:0007669"/>
    <property type="project" value="Ensembl"/>
</dbReference>
<dbReference type="GO" id="GO:0007204">
    <property type="term" value="P:positive regulation of cytosolic calcium ion concentration"/>
    <property type="evidence" value="ECO:0000318"/>
    <property type="project" value="GO_Central"/>
</dbReference>
<dbReference type="GO" id="GO:2000448">
    <property type="term" value="P:positive regulation of macrophage migration inhibitory factor signaling pathway"/>
    <property type="evidence" value="ECO:0007669"/>
    <property type="project" value="Ensembl"/>
</dbReference>
<dbReference type="GO" id="GO:1904018">
    <property type="term" value="P:positive regulation of vasculature development"/>
    <property type="evidence" value="ECO:0007669"/>
    <property type="project" value="Ensembl"/>
</dbReference>
<dbReference type="GO" id="GO:0030155">
    <property type="term" value="P:regulation of cell adhesion"/>
    <property type="evidence" value="ECO:0007669"/>
    <property type="project" value="Ensembl"/>
</dbReference>
<dbReference type="GO" id="GO:0050920">
    <property type="term" value="P:regulation of chemotaxis"/>
    <property type="evidence" value="ECO:0007669"/>
    <property type="project" value="Ensembl"/>
</dbReference>
<dbReference type="GO" id="GO:0001666">
    <property type="term" value="P:response to hypoxia"/>
    <property type="evidence" value="ECO:0007669"/>
    <property type="project" value="Ensembl"/>
</dbReference>
<dbReference type="CDD" id="cd15179">
    <property type="entry name" value="7tmA_CXCR4"/>
    <property type="match status" value="1"/>
</dbReference>
<dbReference type="FunFam" id="1.20.1070.10:FF:000063">
    <property type="entry name" value="C-X-C chemokine receptor type 4"/>
    <property type="match status" value="1"/>
</dbReference>
<dbReference type="Gene3D" id="1.20.1070.10">
    <property type="entry name" value="Rhodopsin 7-helix transmembrane proteins"/>
    <property type="match status" value="1"/>
</dbReference>
<dbReference type="InterPro" id="IPR050119">
    <property type="entry name" value="CCR1-9-like"/>
</dbReference>
<dbReference type="InterPro" id="IPR022726">
    <property type="entry name" value="Chemokine_CXCR4_N_dom"/>
</dbReference>
<dbReference type="InterPro" id="IPR000355">
    <property type="entry name" value="Chemokine_rcpt"/>
</dbReference>
<dbReference type="InterPro" id="IPR001277">
    <property type="entry name" value="CXCR4/ACKR2"/>
</dbReference>
<dbReference type="InterPro" id="IPR000276">
    <property type="entry name" value="GPCR_Rhodpsn"/>
</dbReference>
<dbReference type="InterPro" id="IPR017452">
    <property type="entry name" value="GPCR_Rhodpsn_7TM"/>
</dbReference>
<dbReference type="PANTHER" id="PTHR10489:SF594">
    <property type="entry name" value="C-X-C CHEMOKINE RECEPTOR TYPE 4"/>
    <property type="match status" value="1"/>
</dbReference>
<dbReference type="PANTHER" id="PTHR10489">
    <property type="entry name" value="CELL ADHESION MOLECULE"/>
    <property type="match status" value="1"/>
</dbReference>
<dbReference type="Pfam" id="PF00001">
    <property type="entry name" value="7tm_1"/>
    <property type="match status" value="1"/>
</dbReference>
<dbReference type="Pfam" id="PF12109">
    <property type="entry name" value="CXCR4_N"/>
    <property type="match status" value="1"/>
</dbReference>
<dbReference type="PRINTS" id="PR00657">
    <property type="entry name" value="CCCHEMOKINER"/>
</dbReference>
<dbReference type="PRINTS" id="PR00645">
    <property type="entry name" value="CXCCHMKINER4"/>
</dbReference>
<dbReference type="PRINTS" id="PR00237">
    <property type="entry name" value="GPCRRHODOPSN"/>
</dbReference>
<dbReference type="SUPFAM" id="SSF81321">
    <property type="entry name" value="Family A G protein-coupled receptor-like"/>
    <property type="match status" value="1"/>
</dbReference>
<dbReference type="PROSITE" id="PS00237">
    <property type="entry name" value="G_PROTEIN_RECEP_F1_1"/>
    <property type="match status" value="1"/>
</dbReference>
<dbReference type="PROSITE" id="PS50262">
    <property type="entry name" value="G_PROTEIN_RECEP_F1_2"/>
    <property type="match status" value="1"/>
</dbReference>